<organism>
    <name type="scientific">Pyrobaculum calidifontis (strain DSM 21063 / JCM 11548 / VA1)</name>
    <dbReference type="NCBI Taxonomy" id="410359"/>
    <lineage>
        <taxon>Archaea</taxon>
        <taxon>Thermoproteota</taxon>
        <taxon>Thermoprotei</taxon>
        <taxon>Thermoproteales</taxon>
        <taxon>Thermoproteaceae</taxon>
        <taxon>Pyrobaculum</taxon>
    </lineage>
</organism>
<accession>A3MTU7</accession>
<dbReference type="EMBL" id="CP000561">
    <property type="protein sequence ID" value="ABO08064.1"/>
    <property type="molecule type" value="Genomic_DNA"/>
</dbReference>
<dbReference type="RefSeq" id="WP_011849322.1">
    <property type="nucleotide sequence ID" value="NC_009073.1"/>
</dbReference>
<dbReference type="SMR" id="A3MTU7"/>
<dbReference type="STRING" id="410359.Pcal_0638"/>
<dbReference type="GeneID" id="4908230"/>
<dbReference type="KEGG" id="pcl:Pcal_0638"/>
<dbReference type="eggNOG" id="arCOG01560">
    <property type="taxonomic scope" value="Archaea"/>
</dbReference>
<dbReference type="HOGENOM" id="CLU_002656_3_3_2"/>
<dbReference type="OrthoDB" id="30957at2157"/>
<dbReference type="Proteomes" id="UP000001431">
    <property type="component" value="Chromosome"/>
</dbReference>
<dbReference type="GO" id="GO:0005737">
    <property type="term" value="C:cytoplasm"/>
    <property type="evidence" value="ECO:0007669"/>
    <property type="project" value="TreeGrafter"/>
</dbReference>
<dbReference type="GO" id="GO:0005525">
    <property type="term" value="F:GTP binding"/>
    <property type="evidence" value="ECO:0007669"/>
    <property type="project" value="UniProtKB-KW"/>
</dbReference>
<dbReference type="GO" id="GO:0003924">
    <property type="term" value="F:GTPase activity"/>
    <property type="evidence" value="ECO:0007669"/>
    <property type="project" value="UniProtKB-UniRule"/>
</dbReference>
<dbReference type="GO" id="GO:0003743">
    <property type="term" value="F:translation initiation factor activity"/>
    <property type="evidence" value="ECO:0007669"/>
    <property type="project" value="UniProtKB-UniRule"/>
</dbReference>
<dbReference type="CDD" id="cd03703">
    <property type="entry name" value="aeIF5B_II"/>
    <property type="match status" value="1"/>
</dbReference>
<dbReference type="CDD" id="cd16266">
    <property type="entry name" value="IF2_aeIF5B_IV"/>
    <property type="match status" value="1"/>
</dbReference>
<dbReference type="CDD" id="cd01887">
    <property type="entry name" value="IF2_eIF5B"/>
    <property type="match status" value="1"/>
</dbReference>
<dbReference type="FunFam" id="3.40.50.300:FF:000112">
    <property type="entry name" value="Eukaryotic translation initiation factor 5B"/>
    <property type="match status" value="1"/>
</dbReference>
<dbReference type="FunFam" id="3.40.50.10050:FF:000001">
    <property type="entry name" value="Translation initiation factor IF-2"/>
    <property type="match status" value="1"/>
</dbReference>
<dbReference type="Gene3D" id="3.40.50.300">
    <property type="entry name" value="P-loop containing nucleotide triphosphate hydrolases"/>
    <property type="match status" value="1"/>
</dbReference>
<dbReference type="Gene3D" id="2.40.30.10">
    <property type="entry name" value="Translation factors"/>
    <property type="match status" value="2"/>
</dbReference>
<dbReference type="Gene3D" id="3.40.50.10050">
    <property type="entry name" value="Translation initiation factor IF- 2, domain 3"/>
    <property type="match status" value="1"/>
</dbReference>
<dbReference type="HAMAP" id="MF_00100_A">
    <property type="entry name" value="IF_2_A"/>
    <property type="match status" value="1"/>
</dbReference>
<dbReference type="InterPro" id="IPR029459">
    <property type="entry name" value="EFTU-type"/>
</dbReference>
<dbReference type="InterPro" id="IPR027417">
    <property type="entry name" value="P-loop_NTPase"/>
</dbReference>
<dbReference type="InterPro" id="IPR005225">
    <property type="entry name" value="Small_GTP-bd"/>
</dbReference>
<dbReference type="InterPro" id="IPR000795">
    <property type="entry name" value="T_Tr_GTP-bd_dom"/>
</dbReference>
<dbReference type="InterPro" id="IPR004544">
    <property type="entry name" value="TF_aIF-2_arc"/>
</dbReference>
<dbReference type="InterPro" id="IPR015760">
    <property type="entry name" value="TIF_IF2"/>
</dbReference>
<dbReference type="InterPro" id="IPR023115">
    <property type="entry name" value="TIF_IF2_dom3"/>
</dbReference>
<dbReference type="InterPro" id="IPR036925">
    <property type="entry name" value="TIF_IF2_dom3_sf"/>
</dbReference>
<dbReference type="InterPro" id="IPR009000">
    <property type="entry name" value="Transl_B-barrel_sf"/>
</dbReference>
<dbReference type="NCBIfam" id="TIGR00491">
    <property type="entry name" value="aIF-2"/>
    <property type="match status" value="1"/>
</dbReference>
<dbReference type="NCBIfam" id="NF003078">
    <property type="entry name" value="PRK04004.1"/>
    <property type="match status" value="1"/>
</dbReference>
<dbReference type="NCBIfam" id="TIGR00231">
    <property type="entry name" value="small_GTP"/>
    <property type="match status" value="1"/>
</dbReference>
<dbReference type="PANTHER" id="PTHR43381:SF4">
    <property type="entry name" value="EUKARYOTIC TRANSLATION INITIATION FACTOR 5B"/>
    <property type="match status" value="1"/>
</dbReference>
<dbReference type="PANTHER" id="PTHR43381">
    <property type="entry name" value="TRANSLATION INITIATION FACTOR IF-2-RELATED"/>
    <property type="match status" value="1"/>
</dbReference>
<dbReference type="Pfam" id="PF00009">
    <property type="entry name" value="GTP_EFTU"/>
    <property type="match status" value="1"/>
</dbReference>
<dbReference type="Pfam" id="PF14578">
    <property type="entry name" value="GTP_EFTU_D4"/>
    <property type="match status" value="1"/>
</dbReference>
<dbReference type="Pfam" id="PF11987">
    <property type="entry name" value="IF-2"/>
    <property type="match status" value="1"/>
</dbReference>
<dbReference type="PRINTS" id="PR00315">
    <property type="entry name" value="ELONGATNFCT"/>
</dbReference>
<dbReference type="SUPFAM" id="SSF52156">
    <property type="entry name" value="Initiation factor IF2/eIF5b, domain 3"/>
    <property type="match status" value="1"/>
</dbReference>
<dbReference type="SUPFAM" id="SSF52540">
    <property type="entry name" value="P-loop containing nucleoside triphosphate hydrolases"/>
    <property type="match status" value="1"/>
</dbReference>
<dbReference type="SUPFAM" id="SSF50447">
    <property type="entry name" value="Translation proteins"/>
    <property type="match status" value="1"/>
</dbReference>
<dbReference type="PROSITE" id="PS51722">
    <property type="entry name" value="G_TR_2"/>
    <property type="match status" value="1"/>
</dbReference>
<reference key="1">
    <citation type="submission" date="2007-02" db="EMBL/GenBank/DDBJ databases">
        <title>Complete sequence of Pyrobaculum calidifontis JCM 11548.</title>
        <authorList>
            <consortium name="US DOE Joint Genome Institute"/>
            <person name="Copeland A."/>
            <person name="Lucas S."/>
            <person name="Lapidus A."/>
            <person name="Barry K."/>
            <person name="Glavina del Rio T."/>
            <person name="Dalin E."/>
            <person name="Tice H."/>
            <person name="Pitluck S."/>
            <person name="Chain P."/>
            <person name="Malfatti S."/>
            <person name="Shin M."/>
            <person name="Vergez L."/>
            <person name="Schmutz J."/>
            <person name="Larimer F."/>
            <person name="Land M."/>
            <person name="Hauser L."/>
            <person name="Kyrpides N."/>
            <person name="Mikhailova N."/>
            <person name="Cozen A.E."/>
            <person name="Fitz-Gibbon S.T."/>
            <person name="House C.H."/>
            <person name="Saltikov C."/>
            <person name="Lowe T.M."/>
            <person name="Richardson P."/>
        </authorList>
    </citation>
    <scope>NUCLEOTIDE SEQUENCE [LARGE SCALE GENOMIC DNA]</scope>
    <source>
        <strain>DSM 21063 / JCM 11548 / VA1</strain>
    </source>
</reference>
<feature type="chain" id="PRO_0000335533" description="Probable translation initiation factor IF-2">
    <location>
        <begin position="1"/>
        <end position="592"/>
    </location>
</feature>
<feature type="domain" description="tr-type G">
    <location>
        <begin position="5"/>
        <end position="226"/>
    </location>
</feature>
<feature type="region of interest" description="G1" evidence="1">
    <location>
        <begin position="14"/>
        <end position="21"/>
    </location>
</feature>
<feature type="region of interest" description="G2" evidence="1">
    <location>
        <begin position="39"/>
        <end position="43"/>
    </location>
</feature>
<feature type="region of interest" description="G3" evidence="1">
    <location>
        <begin position="80"/>
        <end position="83"/>
    </location>
</feature>
<feature type="region of interest" description="G4" evidence="1">
    <location>
        <begin position="134"/>
        <end position="137"/>
    </location>
</feature>
<feature type="region of interest" description="G5" evidence="1">
    <location>
        <begin position="202"/>
        <end position="204"/>
    </location>
</feature>
<feature type="binding site" evidence="2">
    <location>
        <begin position="14"/>
        <end position="21"/>
    </location>
    <ligand>
        <name>GTP</name>
        <dbReference type="ChEBI" id="CHEBI:37565"/>
    </ligand>
</feature>
<feature type="binding site" evidence="2">
    <location>
        <begin position="80"/>
        <end position="84"/>
    </location>
    <ligand>
        <name>GTP</name>
        <dbReference type="ChEBI" id="CHEBI:37565"/>
    </ligand>
</feature>
<feature type="binding site" evidence="2">
    <location>
        <begin position="134"/>
        <end position="137"/>
    </location>
    <ligand>
        <name>GTP</name>
        <dbReference type="ChEBI" id="CHEBI:37565"/>
    </ligand>
</feature>
<sequence length="592" mass="65291">MQQKIRSPFVVVMGHVDVGKTLLLDKIRGTSVAYREPGMITQHIGMSLVPWPAVEKFAGPLVDRLKLRGRIWIPGFLFIDTPGHAAFSNLRKRGGSVADLAILVVDITSGLEDQGVESLKLIQSRGVPFVIAANKLDRIYGWKSVENRPFLFAVEEQEWHAVATLEEQIGKLITQLANLGIDADRYDRVRDFSKQVPIVPTSAVTGEGVADLLLVLAGVSQRFIPREKLQVRDGPARGVVMEVKEERGLGVVADVILYDGKLRKGDVIVTAGLDGSRQAKVRMLIMPKSLEEMRDPEDKFMAVQEVEAAAGVRVVAEGLEGVVAGAPLLAVWDPKDLPEALKSVGEEIAEIKIESDKEGVIVRADTFGTLESIILFLRQQGVPVRKADVGPPTHKDVVEAVLSRRKNPAYGAILAFNVKVPPEVETEAQSSGVKIIRGEILYRIFDEYVKWSTEVKTKTVEQVLSQLTRPAKIQILPGYVFRRSDPAIVGVKVLAGTLKPGVTLAKDGREVGKVMQIQRQGKPVAEAVAGDEVAISIQGDVIVGRQIKEGDVLYVYIPDEQARQWLFRYKQYLRKDEVEALEEYLKTRKKSA</sequence>
<proteinExistence type="inferred from homology"/>
<evidence type="ECO:0000250" key="1"/>
<evidence type="ECO:0000255" key="2">
    <source>
        <dbReference type="HAMAP-Rule" id="MF_00100"/>
    </source>
</evidence>
<protein>
    <recommendedName>
        <fullName evidence="2">Probable translation initiation factor IF-2</fullName>
    </recommendedName>
</protein>
<keyword id="KW-0342">GTP-binding</keyword>
<keyword id="KW-0396">Initiation factor</keyword>
<keyword id="KW-0547">Nucleotide-binding</keyword>
<keyword id="KW-0648">Protein biosynthesis</keyword>
<comment type="function">
    <text evidence="2">Function in general translation initiation by promoting the binding of the formylmethionine-tRNA to ribosomes. Seems to function along with eIF-2.</text>
</comment>
<comment type="similarity">
    <text evidence="2">Belongs to the TRAFAC class translation factor GTPase superfamily. Classic translation factor GTPase family. IF-2 subfamily.</text>
</comment>
<name>IF2P_PYRCJ</name>
<gene>
    <name evidence="2" type="primary">infB</name>
    <name type="ordered locus">Pcal_0638</name>
</gene>